<keyword id="KW-0963">Cytoplasm</keyword>
<keyword id="KW-0460">Magnesium</keyword>
<keyword id="KW-0479">Metal-binding</keyword>
<keyword id="KW-0566">Pantothenate biosynthesis</keyword>
<keyword id="KW-1185">Reference proteome</keyword>
<keyword id="KW-0808">Transferase</keyword>
<protein>
    <recommendedName>
        <fullName evidence="1">3-methyl-2-oxobutanoate hydroxymethyltransferase 2</fullName>
        <ecNumber evidence="1">2.1.2.11</ecNumber>
    </recommendedName>
    <alternativeName>
        <fullName evidence="1">Ketopantoate hydroxymethyltransferase 2</fullName>
        <shortName evidence="1">KPHMT 2</shortName>
    </alternativeName>
</protein>
<dbReference type="EC" id="2.1.2.11" evidence="1"/>
<dbReference type="EMBL" id="CP000155">
    <property type="protein sequence ID" value="ABC32911.1"/>
    <property type="molecule type" value="Genomic_DNA"/>
</dbReference>
<dbReference type="RefSeq" id="WP_011399967.1">
    <property type="nucleotide sequence ID" value="NC_007645.1"/>
</dbReference>
<dbReference type="SMR" id="Q2S8W3"/>
<dbReference type="STRING" id="349521.HCH_06264"/>
<dbReference type="KEGG" id="hch:HCH_06264"/>
<dbReference type="eggNOG" id="COG0413">
    <property type="taxonomic scope" value="Bacteria"/>
</dbReference>
<dbReference type="HOGENOM" id="CLU_036645_1_0_6"/>
<dbReference type="OrthoDB" id="9781789at2"/>
<dbReference type="UniPathway" id="UPA00028">
    <property type="reaction ID" value="UER00003"/>
</dbReference>
<dbReference type="Proteomes" id="UP000000238">
    <property type="component" value="Chromosome"/>
</dbReference>
<dbReference type="GO" id="GO:0005737">
    <property type="term" value="C:cytoplasm"/>
    <property type="evidence" value="ECO:0007669"/>
    <property type="project" value="UniProtKB-SubCell"/>
</dbReference>
<dbReference type="GO" id="GO:0003864">
    <property type="term" value="F:3-methyl-2-oxobutanoate hydroxymethyltransferase activity"/>
    <property type="evidence" value="ECO:0007669"/>
    <property type="project" value="UniProtKB-UniRule"/>
</dbReference>
<dbReference type="GO" id="GO:0000287">
    <property type="term" value="F:magnesium ion binding"/>
    <property type="evidence" value="ECO:0007669"/>
    <property type="project" value="TreeGrafter"/>
</dbReference>
<dbReference type="GO" id="GO:0015940">
    <property type="term" value="P:pantothenate biosynthetic process"/>
    <property type="evidence" value="ECO:0007669"/>
    <property type="project" value="UniProtKB-UniRule"/>
</dbReference>
<dbReference type="CDD" id="cd06557">
    <property type="entry name" value="KPHMT-like"/>
    <property type="match status" value="1"/>
</dbReference>
<dbReference type="FunFam" id="3.20.20.60:FF:000003">
    <property type="entry name" value="3-methyl-2-oxobutanoate hydroxymethyltransferase"/>
    <property type="match status" value="1"/>
</dbReference>
<dbReference type="Gene3D" id="3.20.20.60">
    <property type="entry name" value="Phosphoenolpyruvate-binding domains"/>
    <property type="match status" value="1"/>
</dbReference>
<dbReference type="HAMAP" id="MF_00156">
    <property type="entry name" value="PanB"/>
    <property type="match status" value="1"/>
</dbReference>
<dbReference type="InterPro" id="IPR003700">
    <property type="entry name" value="Pantoate_hydroxy_MeTrfase"/>
</dbReference>
<dbReference type="InterPro" id="IPR015813">
    <property type="entry name" value="Pyrv/PenolPyrv_kinase-like_dom"/>
</dbReference>
<dbReference type="InterPro" id="IPR040442">
    <property type="entry name" value="Pyrv_kinase-like_dom_sf"/>
</dbReference>
<dbReference type="NCBIfam" id="TIGR00222">
    <property type="entry name" value="panB"/>
    <property type="match status" value="1"/>
</dbReference>
<dbReference type="NCBIfam" id="NF001452">
    <property type="entry name" value="PRK00311.1"/>
    <property type="match status" value="1"/>
</dbReference>
<dbReference type="PANTHER" id="PTHR20881">
    <property type="entry name" value="3-METHYL-2-OXOBUTANOATE HYDROXYMETHYLTRANSFERASE"/>
    <property type="match status" value="1"/>
</dbReference>
<dbReference type="PANTHER" id="PTHR20881:SF0">
    <property type="entry name" value="3-METHYL-2-OXOBUTANOATE HYDROXYMETHYLTRANSFERASE"/>
    <property type="match status" value="1"/>
</dbReference>
<dbReference type="Pfam" id="PF02548">
    <property type="entry name" value="Pantoate_transf"/>
    <property type="match status" value="1"/>
</dbReference>
<dbReference type="PIRSF" id="PIRSF000388">
    <property type="entry name" value="Pantoate_hydroxy_MeTrfase"/>
    <property type="match status" value="1"/>
</dbReference>
<dbReference type="SUPFAM" id="SSF51621">
    <property type="entry name" value="Phosphoenolpyruvate/pyruvate domain"/>
    <property type="match status" value="1"/>
</dbReference>
<proteinExistence type="inferred from homology"/>
<sequence>MSITLSTLLDLKKKSEKFAVMTAYDATFAYEMDQAGVEVILVGDSLGMVLQGHDSTIPVRLEDMVYHTASVRRGARNAFIIADMPFMSYGTPDQAMAGAKQLMQAGAHMVKLEGGAWLCDAIAHLSRQGVPICAHLGLTPQSVNKFGGYKVQGKEASQAQLMLDDAKALEQAGADILLLECVPTKLAKQLTEEACAPVVGIGAGPYTDGQVLVMHDLLGVGAGKKPKFVKNFLAGSDSIQAAFKGYVEAVKSGAFPAEEHSFNI</sequence>
<name>PANB2_HAHCH</name>
<gene>
    <name evidence="1" type="primary">panB2</name>
    <name type="ordered locus">HCH_06264</name>
</gene>
<comment type="function">
    <text evidence="1">Catalyzes the reversible reaction in which hydroxymethyl group from 5,10-methylenetetrahydrofolate is transferred onto alpha-ketoisovalerate to form ketopantoate.</text>
</comment>
<comment type="catalytic activity">
    <reaction evidence="1">
        <text>3-methyl-2-oxobutanoate + (6R)-5,10-methylene-5,6,7,8-tetrahydrofolate + H2O = 2-dehydropantoate + (6S)-5,6,7,8-tetrahydrofolate</text>
        <dbReference type="Rhea" id="RHEA:11824"/>
        <dbReference type="ChEBI" id="CHEBI:11561"/>
        <dbReference type="ChEBI" id="CHEBI:11851"/>
        <dbReference type="ChEBI" id="CHEBI:15377"/>
        <dbReference type="ChEBI" id="CHEBI:15636"/>
        <dbReference type="ChEBI" id="CHEBI:57453"/>
        <dbReference type="EC" id="2.1.2.11"/>
    </reaction>
</comment>
<comment type="cofactor">
    <cofactor evidence="1">
        <name>Mg(2+)</name>
        <dbReference type="ChEBI" id="CHEBI:18420"/>
    </cofactor>
    <text evidence="1">Binds 1 Mg(2+) ion per subunit.</text>
</comment>
<comment type="pathway">
    <text evidence="1">Cofactor biosynthesis; (R)-pantothenate biosynthesis; (R)-pantoate from 3-methyl-2-oxobutanoate: step 1/2.</text>
</comment>
<comment type="subunit">
    <text evidence="1">Homodecamer; pentamer of dimers.</text>
</comment>
<comment type="subcellular location">
    <subcellularLocation>
        <location evidence="1">Cytoplasm</location>
    </subcellularLocation>
</comment>
<comment type="similarity">
    <text evidence="1">Belongs to the PanB family.</text>
</comment>
<feature type="chain" id="PRO_0000297279" description="3-methyl-2-oxobutanoate hydroxymethyltransferase 2">
    <location>
        <begin position="1"/>
        <end position="264"/>
    </location>
</feature>
<feature type="active site" description="Proton acceptor" evidence="1">
    <location>
        <position position="180"/>
    </location>
</feature>
<feature type="binding site" evidence="1">
    <location>
        <begin position="44"/>
        <end position="45"/>
    </location>
    <ligand>
        <name>3-methyl-2-oxobutanoate</name>
        <dbReference type="ChEBI" id="CHEBI:11851"/>
    </ligand>
</feature>
<feature type="binding site" evidence="1">
    <location>
        <position position="44"/>
    </location>
    <ligand>
        <name>Mg(2+)</name>
        <dbReference type="ChEBI" id="CHEBI:18420"/>
    </ligand>
</feature>
<feature type="binding site" evidence="1">
    <location>
        <position position="83"/>
    </location>
    <ligand>
        <name>3-methyl-2-oxobutanoate</name>
        <dbReference type="ChEBI" id="CHEBI:11851"/>
    </ligand>
</feature>
<feature type="binding site" evidence="1">
    <location>
        <position position="83"/>
    </location>
    <ligand>
        <name>Mg(2+)</name>
        <dbReference type="ChEBI" id="CHEBI:18420"/>
    </ligand>
</feature>
<feature type="binding site" evidence="1">
    <location>
        <position position="111"/>
    </location>
    <ligand>
        <name>3-methyl-2-oxobutanoate</name>
        <dbReference type="ChEBI" id="CHEBI:11851"/>
    </ligand>
</feature>
<feature type="binding site" evidence="1">
    <location>
        <position position="113"/>
    </location>
    <ligand>
        <name>Mg(2+)</name>
        <dbReference type="ChEBI" id="CHEBI:18420"/>
    </ligand>
</feature>
<evidence type="ECO:0000255" key="1">
    <source>
        <dbReference type="HAMAP-Rule" id="MF_00156"/>
    </source>
</evidence>
<reference key="1">
    <citation type="journal article" date="2005" name="Nucleic Acids Res.">
        <title>Genomic blueprint of Hahella chejuensis, a marine microbe producing an algicidal agent.</title>
        <authorList>
            <person name="Jeong H."/>
            <person name="Yim J.H."/>
            <person name="Lee C."/>
            <person name="Choi S.-H."/>
            <person name="Park Y.K."/>
            <person name="Yoon S.H."/>
            <person name="Hur C.-G."/>
            <person name="Kang H.-Y."/>
            <person name="Kim D."/>
            <person name="Lee H.H."/>
            <person name="Park K.H."/>
            <person name="Park S.-H."/>
            <person name="Park H.-S."/>
            <person name="Lee H.K."/>
            <person name="Oh T.K."/>
            <person name="Kim J.F."/>
        </authorList>
    </citation>
    <scope>NUCLEOTIDE SEQUENCE [LARGE SCALE GENOMIC DNA]</scope>
    <source>
        <strain>KCTC 2396</strain>
    </source>
</reference>
<organism>
    <name type="scientific">Hahella chejuensis (strain KCTC 2396)</name>
    <dbReference type="NCBI Taxonomy" id="349521"/>
    <lineage>
        <taxon>Bacteria</taxon>
        <taxon>Pseudomonadati</taxon>
        <taxon>Pseudomonadota</taxon>
        <taxon>Gammaproteobacteria</taxon>
        <taxon>Oceanospirillales</taxon>
        <taxon>Hahellaceae</taxon>
        <taxon>Hahella</taxon>
    </lineage>
</organism>
<accession>Q2S8W3</accession>